<feature type="chain" id="PRO_0000302388" description="Glycine cleavage system H protein">
    <location>
        <begin position="1"/>
        <end position="123"/>
    </location>
</feature>
<feature type="domain" description="Lipoyl-binding" evidence="2">
    <location>
        <begin position="23"/>
        <end position="104"/>
    </location>
</feature>
<feature type="modified residue" description="N6-lipoyllysine" evidence="1">
    <location>
        <position position="64"/>
    </location>
</feature>
<proteinExistence type="inferred from homology"/>
<name>GCSH_METFK</name>
<comment type="function">
    <text evidence="1">The glycine cleavage system catalyzes the degradation of glycine. The H protein shuttles the methylamine group of glycine from the P protein to the T protein.</text>
</comment>
<comment type="cofactor">
    <cofactor evidence="1">
        <name>(R)-lipoate</name>
        <dbReference type="ChEBI" id="CHEBI:83088"/>
    </cofactor>
    <text evidence="1">Binds 1 lipoyl cofactor covalently.</text>
</comment>
<comment type="subunit">
    <text evidence="1">The glycine cleavage system is composed of four proteins: P, T, L and H.</text>
</comment>
<comment type="similarity">
    <text evidence="1">Belongs to the GcvH family.</text>
</comment>
<accession>Q1H4U1</accession>
<reference key="1">
    <citation type="submission" date="2006-03" db="EMBL/GenBank/DDBJ databases">
        <title>Complete sequence of Methylobacillus flagellatus KT.</title>
        <authorList>
            <consortium name="US DOE Joint Genome Institute"/>
            <person name="Copeland A."/>
            <person name="Lucas S."/>
            <person name="Lapidus A."/>
            <person name="Barry K."/>
            <person name="Detter J.C."/>
            <person name="Glavina del Rio T."/>
            <person name="Hammon N."/>
            <person name="Israni S."/>
            <person name="Dalin E."/>
            <person name="Tice H."/>
            <person name="Pitluck S."/>
            <person name="Brettin T."/>
            <person name="Bruce D."/>
            <person name="Han C."/>
            <person name="Tapia R."/>
            <person name="Saunders E."/>
            <person name="Gilna P."/>
            <person name="Schmutz J."/>
            <person name="Larimer F."/>
            <person name="Land M."/>
            <person name="Kyrpides N."/>
            <person name="Anderson I."/>
            <person name="Richardson P."/>
        </authorList>
    </citation>
    <scope>NUCLEOTIDE SEQUENCE [LARGE SCALE GENOMIC DNA]</scope>
    <source>
        <strain>ATCC 51484 / DSM 6875 / VKM B-1610 / KT</strain>
    </source>
</reference>
<sequence>MNIPENLQYTAEHLWVRPDENGHWLAGITDHAQDLLGDIVYVEAPKPGTRLSAGQPCGLVESVKTGSDLHAPLDGTVTAINEALQITPEEINDRPYDAWIFSFEPEHAPTGLLSAAEYRALLG</sequence>
<organism>
    <name type="scientific">Methylobacillus flagellatus (strain ATCC 51484 / DSM 6875 / VKM B-1610 / KT)</name>
    <dbReference type="NCBI Taxonomy" id="265072"/>
    <lineage>
        <taxon>Bacteria</taxon>
        <taxon>Pseudomonadati</taxon>
        <taxon>Pseudomonadota</taxon>
        <taxon>Betaproteobacteria</taxon>
        <taxon>Nitrosomonadales</taxon>
        <taxon>Methylophilaceae</taxon>
        <taxon>Methylobacillus</taxon>
    </lineage>
</organism>
<evidence type="ECO:0000255" key="1">
    <source>
        <dbReference type="HAMAP-Rule" id="MF_00272"/>
    </source>
</evidence>
<evidence type="ECO:0000255" key="2">
    <source>
        <dbReference type="PROSITE-ProRule" id="PRU01066"/>
    </source>
</evidence>
<protein>
    <recommendedName>
        <fullName evidence="1">Glycine cleavage system H protein</fullName>
    </recommendedName>
</protein>
<gene>
    <name evidence="1" type="primary">gcvH</name>
    <name type="ordered locus">Mfla_0225</name>
</gene>
<dbReference type="EMBL" id="CP000284">
    <property type="protein sequence ID" value="ABE48496.1"/>
    <property type="molecule type" value="Genomic_DNA"/>
</dbReference>
<dbReference type="RefSeq" id="WP_011478593.1">
    <property type="nucleotide sequence ID" value="NC_007947.1"/>
</dbReference>
<dbReference type="SMR" id="Q1H4U1"/>
<dbReference type="STRING" id="265072.Mfla_0225"/>
<dbReference type="KEGG" id="mfa:Mfla_0225"/>
<dbReference type="eggNOG" id="COG0509">
    <property type="taxonomic scope" value="Bacteria"/>
</dbReference>
<dbReference type="HOGENOM" id="CLU_097408_2_1_4"/>
<dbReference type="OrthoDB" id="9796712at2"/>
<dbReference type="Proteomes" id="UP000002440">
    <property type="component" value="Chromosome"/>
</dbReference>
<dbReference type="GO" id="GO:0005829">
    <property type="term" value="C:cytosol"/>
    <property type="evidence" value="ECO:0007669"/>
    <property type="project" value="TreeGrafter"/>
</dbReference>
<dbReference type="GO" id="GO:0005960">
    <property type="term" value="C:glycine cleavage complex"/>
    <property type="evidence" value="ECO:0007669"/>
    <property type="project" value="InterPro"/>
</dbReference>
<dbReference type="GO" id="GO:0019464">
    <property type="term" value="P:glycine decarboxylation via glycine cleavage system"/>
    <property type="evidence" value="ECO:0007669"/>
    <property type="project" value="UniProtKB-UniRule"/>
</dbReference>
<dbReference type="CDD" id="cd06848">
    <property type="entry name" value="GCS_H"/>
    <property type="match status" value="1"/>
</dbReference>
<dbReference type="Gene3D" id="2.40.50.100">
    <property type="match status" value="1"/>
</dbReference>
<dbReference type="HAMAP" id="MF_00272">
    <property type="entry name" value="GcvH"/>
    <property type="match status" value="1"/>
</dbReference>
<dbReference type="InterPro" id="IPR000089">
    <property type="entry name" value="Biotin_lipoyl"/>
</dbReference>
<dbReference type="InterPro" id="IPR002930">
    <property type="entry name" value="GCV_H"/>
</dbReference>
<dbReference type="InterPro" id="IPR033753">
    <property type="entry name" value="GCV_H/Fam206"/>
</dbReference>
<dbReference type="InterPro" id="IPR017453">
    <property type="entry name" value="GCV_H_sub"/>
</dbReference>
<dbReference type="InterPro" id="IPR011053">
    <property type="entry name" value="Single_hybrid_motif"/>
</dbReference>
<dbReference type="NCBIfam" id="TIGR00527">
    <property type="entry name" value="gcvH"/>
    <property type="match status" value="1"/>
</dbReference>
<dbReference type="NCBIfam" id="NF002270">
    <property type="entry name" value="PRK01202.1"/>
    <property type="match status" value="1"/>
</dbReference>
<dbReference type="PANTHER" id="PTHR11715">
    <property type="entry name" value="GLYCINE CLEAVAGE SYSTEM H PROTEIN"/>
    <property type="match status" value="1"/>
</dbReference>
<dbReference type="PANTHER" id="PTHR11715:SF3">
    <property type="entry name" value="GLYCINE CLEAVAGE SYSTEM H PROTEIN-RELATED"/>
    <property type="match status" value="1"/>
</dbReference>
<dbReference type="Pfam" id="PF01597">
    <property type="entry name" value="GCV_H"/>
    <property type="match status" value="1"/>
</dbReference>
<dbReference type="SUPFAM" id="SSF51230">
    <property type="entry name" value="Single hybrid motif"/>
    <property type="match status" value="1"/>
</dbReference>
<dbReference type="PROSITE" id="PS50968">
    <property type="entry name" value="BIOTINYL_LIPOYL"/>
    <property type="match status" value="1"/>
</dbReference>
<keyword id="KW-0450">Lipoyl</keyword>
<keyword id="KW-1185">Reference proteome</keyword>